<protein>
    <recommendedName>
        <fullName evidence="1">Crotonobetainyl-CoA reductase</fullName>
        <ecNumber evidence="1">1.3.8.13</ecNumber>
    </recommendedName>
    <alternativeName>
        <fullName evidence="1">Crotonobetainyl-CoA dehydrogenase</fullName>
    </alternativeName>
</protein>
<evidence type="ECO:0000255" key="1">
    <source>
        <dbReference type="HAMAP-Rule" id="MF_01052"/>
    </source>
</evidence>
<keyword id="KW-0963">Cytoplasm</keyword>
<keyword id="KW-0274">FAD</keyword>
<keyword id="KW-0285">Flavoprotein</keyword>
<keyword id="KW-0560">Oxidoreductase</keyword>
<gene>
    <name evidence="1" type="primary">caiA</name>
    <name type="ordered locus">STY0083</name>
    <name type="ordered locus">t0074</name>
</gene>
<feature type="chain" id="PRO_0000201197" description="Crotonobetainyl-CoA reductase">
    <location>
        <begin position="1"/>
        <end position="380"/>
    </location>
</feature>
<name>CAIA_SALTI</name>
<reference key="1">
    <citation type="journal article" date="2001" name="Nature">
        <title>Complete genome sequence of a multiple drug resistant Salmonella enterica serovar Typhi CT18.</title>
        <authorList>
            <person name="Parkhill J."/>
            <person name="Dougan G."/>
            <person name="James K.D."/>
            <person name="Thomson N.R."/>
            <person name="Pickard D."/>
            <person name="Wain J."/>
            <person name="Churcher C.M."/>
            <person name="Mungall K.L."/>
            <person name="Bentley S.D."/>
            <person name="Holden M.T.G."/>
            <person name="Sebaihia M."/>
            <person name="Baker S."/>
            <person name="Basham D."/>
            <person name="Brooks K."/>
            <person name="Chillingworth T."/>
            <person name="Connerton P."/>
            <person name="Cronin A."/>
            <person name="Davis P."/>
            <person name="Davies R.M."/>
            <person name="Dowd L."/>
            <person name="White N."/>
            <person name="Farrar J."/>
            <person name="Feltwell T."/>
            <person name="Hamlin N."/>
            <person name="Haque A."/>
            <person name="Hien T.T."/>
            <person name="Holroyd S."/>
            <person name="Jagels K."/>
            <person name="Krogh A."/>
            <person name="Larsen T.S."/>
            <person name="Leather S."/>
            <person name="Moule S."/>
            <person name="O'Gaora P."/>
            <person name="Parry C."/>
            <person name="Quail M.A."/>
            <person name="Rutherford K.M."/>
            <person name="Simmonds M."/>
            <person name="Skelton J."/>
            <person name="Stevens K."/>
            <person name="Whitehead S."/>
            <person name="Barrell B.G."/>
        </authorList>
    </citation>
    <scope>NUCLEOTIDE SEQUENCE [LARGE SCALE GENOMIC DNA]</scope>
    <source>
        <strain>CT18</strain>
    </source>
</reference>
<reference key="2">
    <citation type="journal article" date="2003" name="J. Bacteriol.">
        <title>Comparative genomics of Salmonella enterica serovar Typhi strains Ty2 and CT18.</title>
        <authorList>
            <person name="Deng W."/>
            <person name="Liou S.-R."/>
            <person name="Plunkett G. III"/>
            <person name="Mayhew G.F."/>
            <person name="Rose D.J."/>
            <person name="Burland V."/>
            <person name="Kodoyianni V."/>
            <person name="Schwartz D.C."/>
            <person name="Blattner F.R."/>
        </authorList>
    </citation>
    <scope>NUCLEOTIDE SEQUENCE [LARGE SCALE GENOMIC DNA]</scope>
    <source>
        <strain>ATCC 700931 / Ty2</strain>
    </source>
</reference>
<sequence>MDFNLNDEQELFVAGIRELMASENWEAYFAECDRDSVYPERFVKALADMGIDSLLIPEEHGGLEAGFVTVAAVWMELGRLGAPTYVLYQLPGGFNTFLREGTQEQIDKIMAFRGTGKQMWNSAITEPGAGSDVGSLKTTYTRKNGKVYLNGSKCFITSSAYTPYIVVMARDGASPDKPVYTEWFVDMSKAGIKVNKLEKLGLRMDSCCEITFDDVELDEKDMFGREGNGFNRVKEEFDHERFLVALTNYGTAMCTFEDAARYANQRVQFGEAIGRFQLIQEKFAHMAIKLNSMKNMLLEAAWKADNGTITSGDAAMCKYFCANAAFEVVDTAMQVLGGVGIAGNHRITRFWRDLRVDRVSGGSDEMQILTLGRAVLKQYR</sequence>
<accession>Q8Z9L2</accession>
<proteinExistence type="inferred from homology"/>
<dbReference type="EC" id="1.3.8.13" evidence="1"/>
<dbReference type="EMBL" id="AL513382">
    <property type="protein sequence ID" value="CAD01227.1"/>
    <property type="molecule type" value="Genomic_DNA"/>
</dbReference>
<dbReference type="EMBL" id="AE014613">
    <property type="protein sequence ID" value="AAO67807.1"/>
    <property type="molecule type" value="Genomic_DNA"/>
</dbReference>
<dbReference type="RefSeq" id="NP_454683.1">
    <property type="nucleotide sequence ID" value="NC_003198.1"/>
</dbReference>
<dbReference type="RefSeq" id="WP_000347135.1">
    <property type="nucleotide sequence ID" value="NZ_WSUR01000028.1"/>
</dbReference>
<dbReference type="SMR" id="Q8Z9L2"/>
<dbReference type="STRING" id="220341.gene:17584129"/>
<dbReference type="KEGG" id="stt:t0074"/>
<dbReference type="KEGG" id="sty:STY0083"/>
<dbReference type="PATRIC" id="fig|220341.7.peg.82"/>
<dbReference type="eggNOG" id="COG1960">
    <property type="taxonomic scope" value="Bacteria"/>
</dbReference>
<dbReference type="HOGENOM" id="CLU_018204_0_2_6"/>
<dbReference type="OMA" id="NYDKMGV"/>
<dbReference type="OrthoDB" id="9769473at2"/>
<dbReference type="UniPathway" id="UPA00117"/>
<dbReference type="Proteomes" id="UP000000541">
    <property type="component" value="Chromosome"/>
</dbReference>
<dbReference type="Proteomes" id="UP000002670">
    <property type="component" value="Chromosome"/>
</dbReference>
<dbReference type="GO" id="GO:0005737">
    <property type="term" value="C:cytoplasm"/>
    <property type="evidence" value="ECO:0007669"/>
    <property type="project" value="UniProtKB-SubCell"/>
</dbReference>
<dbReference type="GO" id="GO:0003995">
    <property type="term" value="F:acyl-CoA dehydrogenase activity"/>
    <property type="evidence" value="ECO:0007669"/>
    <property type="project" value="InterPro"/>
</dbReference>
<dbReference type="GO" id="GO:0050660">
    <property type="term" value="F:flavin adenine dinucleotide binding"/>
    <property type="evidence" value="ECO:0007669"/>
    <property type="project" value="InterPro"/>
</dbReference>
<dbReference type="GO" id="GO:0009437">
    <property type="term" value="P:carnitine metabolic process"/>
    <property type="evidence" value="ECO:0007669"/>
    <property type="project" value="UniProtKB-UniRule"/>
</dbReference>
<dbReference type="CDD" id="cd00567">
    <property type="entry name" value="ACAD"/>
    <property type="match status" value="1"/>
</dbReference>
<dbReference type="FunFam" id="1.20.140.10:FF:000001">
    <property type="entry name" value="Acyl-CoA dehydrogenase"/>
    <property type="match status" value="1"/>
</dbReference>
<dbReference type="FunFam" id="2.40.110.10:FF:000002">
    <property type="entry name" value="Acyl-CoA dehydrogenase fadE12"/>
    <property type="match status" value="1"/>
</dbReference>
<dbReference type="FunFam" id="1.10.540.10:FF:000005">
    <property type="entry name" value="Crotonobetainyl-CoA reductase"/>
    <property type="match status" value="1"/>
</dbReference>
<dbReference type="Gene3D" id="1.10.540.10">
    <property type="entry name" value="Acyl-CoA dehydrogenase/oxidase, N-terminal domain"/>
    <property type="match status" value="1"/>
</dbReference>
<dbReference type="Gene3D" id="2.40.110.10">
    <property type="entry name" value="Butyryl-CoA Dehydrogenase, subunit A, domain 2"/>
    <property type="match status" value="1"/>
</dbReference>
<dbReference type="Gene3D" id="1.20.140.10">
    <property type="entry name" value="Butyryl-CoA Dehydrogenase, subunit A, domain 3"/>
    <property type="match status" value="1"/>
</dbReference>
<dbReference type="HAMAP" id="MF_01052">
    <property type="entry name" value="CaiA"/>
    <property type="match status" value="1"/>
</dbReference>
<dbReference type="InterPro" id="IPR006089">
    <property type="entry name" value="Acyl-CoA_DH_CS"/>
</dbReference>
<dbReference type="InterPro" id="IPR006091">
    <property type="entry name" value="Acyl-CoA_Oxase/DH_mid-dom"/>
</dbReference>
<dbReference type="InterPro" id="IPR046373">
    <property type="entry name" value="Acyl-CoA_Oxase/DH_mid-dom_sf"/>
</dbReference>
<dbReference type="InterPro" id="IPR036250">
    <property type="entry name" value="AcylCo_DH-like_C"/>
</dbReference>
<dbReference type="InterPro" id="IPR009075">
    <property type="entry name" value="AcylCo_DH/oxidase_C"/>
</dbReference>
<dbReference type="InterPro" id="IPR013786">
    <property type="entry name" value="AcylCoA_DH/ox_N"/>
</dbReference>
<dbReference type="InterPro" id="IPR037069">
    <property type="entry name" value="AcylCoA_DH/ox_N_sf"/>
</dbReference>
<dbReference type="InterPro" id="IPR009100">
    <property type="entry name" value="AcylCoA_DH/oxidase_NM_dom_sf"/>
</dbReference>
<dbReference type="InterPro" id="IPR023450">
    <property type="entry name" value="CaiA"/>
</dbReference>
<dbReference type="NCBIfam" id="NF002885">
    <property type="entry name" value="PRK03354.1"/>
    <property type="match status" value="1"/>
</dbReference>
<dbReference type="PANTHER" id="PTHR43884">
    <property type="entry name" value="ACYL-COA DEHYDROGENASE"/>
    <property type="match status" value="1"/>
</dbReference>
<dbReference type="PANTHER" id="PTHR43884:SF12">
    <property type="entry name" value="ISOVALERYL-COA DEHYDROGENASE, MITOCHONDRIAL-RELATED"/>
    <property type="match status" value="1"/>
</dbReference>
<dbReference type="Pfam" id="PF00441">
    <property type="entry name" value="Acyl-CoA_dh_1"/>
    <property type="match status" value="1"/>
</dbReference>
<dbReference type="Pfam" id="PF02770">
    <property type="entry name" value="Acyl-CoA_dh_M"/>
    <property type="match status" value="1"/>
</dbReference>
<dbReference type="Pfam" id="PF02771">
    <property type="entry name" value="Acyl-CoA_dh_N"/>
    <property type="match status" value="1"/>
</dbReference>
<dbReference type="PIRSF" id="PIRSF016578">
    <property type="entry name" value="HsaA"/>
    <property type="match status" value="1"/>
</dbReference>
<dbReference type="SUPFAM" id="SSF47203">
    <property type="entry name" value="Acyl-CoA dehydrogenase C-terminal domain-like"/>
    <property type="match status" value="1"/>
</dbReference>
<dbReference type="SUPFAM" id="SSF56645">
    <property type="entry name" value="Acyl-CoA dehydrogenase NM domain-like"/>
    <property type="match status" value="1"/>
</dbReference>
<dbReference type="PROSITE" id="PS00072">
    <property type="entry name" value="ACYL_COA_DH_1"/>
    <property type="match status" value="1"/>
</dbReference>
<dbReference type="PROSITE" id="PS00073">
    <property type="entry name" value="ACYL_COA_DH_2"/>
    <property type="match status" value="1"/>
</dbReference>
<organism>
    <name type="scientific">Salmonella typhi</name>
    <dbReference type="NCBI Taxonomy" id="90370"/>
    <lineage>
        <taxon>Bacteria</taxon>
        <taxon>Pseudomonadati</taxon>
        <taxon>Pseudomonadota</taxon>
        <taxon>Gammaproteobacteria</taxon>
        <taxon>Enterobacterales</taxon>
        <taxon>Enterobacteriaceae</taxon>
        <taxon>Salmonella</taxon>
    </lineage>
</organism>
<comment type="function">
    <text evidence="1">Catalyzes the reduction of crotonobetainyl-CoA to gamma-butyrobetainyl-CoA.</text>
</comment>
<comment type="catalytic activity">
    <reaction evidence="1">
        <text>4-(trimethylamino)butanoyl-CoA + oxidized [electron-transfer flavoprotein] + H(+) = crotonobetainyl-CoA + reduced [electron-transfer flavoprotein]</text>
        <dbReference type="Rhea" id="RHEA:51584"/>
        <dbReference type="Rhea" id="RHEA-COMP:10685"/>
        <dbReference type="Rhea" id="RHEA-COMP:10686"/>
        <dbReference type="ChEBI" id="CHEBI:15378"/>
        <dbReference type="ChEBI" id="CHEBI:57692"/>
        <dbReference type="ChEBI" id="CHEBI:58307"/>
        <dbReference type="ChEBI" id="CHEBI:60933"/>
        <dbReference type="ChEBI" id="CHEBI:61513"/>
        <dbReference type="EC" id="1.3.8.13"/>
    </reaction>
</comment>
<comment type="cofactor">
    <cofactor evidence="1">
        <name>FAD</name>
        <dbReference type="ChEBI" id="CHEBI:57692"/>
    </cofactor>
</comment>
<comment type="pathway">
    <text evidence="1">Amine and polyamine metabolism; carnitine metabolism.</text>
</comment>
<comment type="subunit">
    <text evidence="1">Homotetramer.</text>
</comment>
<comment type="subcellular location">
    <subcellularLocation>
        <location evidence="1">Cytoplasm</location>
    </subcellularLocation>
</comment>
<comment type="similarity">
    <text evidence="1">Belongs to the acyl-CoA dehydrogenase family.</text>
</comment>